<gene>
    <name evidence="1" type="primary">actP</name>
    <name type="ordered locus">SBO_4098</name>
</gene>
<reference key="1">
    <citation type="journal article" date="2005" name="Nucleic Acids Res.">
        <title>Genome dynamics and diversity of Shigella species, the etiologic agents of bacillary dysentery.</title>
        <authorList>
            <person name="Yang F."/>
            <person name="Yang J."/>
            <person name="Zhang X."/>
            <person name="Chen L."/>
            <person name="Jiang Y."/>
            <person name="Yan Y."/>
            <person name="Tang X."/>
            <person name="Wang J."/>
            <person name="Xiong Z."/>
            <person name="Dong J."/>
            <person name="Xue Y."/>
            <person name="Zhu Y."/>
            <person name="Xu X."/>
            <person name="Sun L."/>
            <person name="Chen S."/>
            <person name="Nie H."/>
            <person name="Peng J."/>
            <person name="Xu J."/>
            <person name="Wang Y."/>
            <person name="Yuan Z."/>
            <person name="Wen Y."/>
            <person name="Yao Z."/>
            <person name="Shen Y."/>
            <person name="Qiang B."/>
            <person name="Hou Y."/>
            <person name="Yu J."/>
            <person name="Jin Q."/>
        </authorList>
    </citation>
    <scope>NUCLEOTIDE SEQUENCE [LARGE SCALE GENOMIC DNA]</scope>
    <source>
        <strain>Sb227</strain>
    </source>
</reference>
<keyword id="KW-0997">Cell inner membrane</keyword>
<keyword id="KW-1003">Cell membrane</keyword>
<keyword id="KW-0406">Ion transport</keyword>
<keyword id="KW-0472">Membrane</keyword>
<keyword id="KW-0915">Sodium</keyword>
<keyword id="KW-0739">Sodium transport</keyword>
<keyword id="KW-0769">Symport</keyword>
<keyword id="KW-0812">Transmembrane</keyword>
<keyword id="KW-1133">Transmembrane helix</keyword>
<keyword id="KW-0813">Transport</keyword>
<dbReference type="EMBL" id="CP000036">
    <property type="protein sequence ID" value="ABB68531.1"/>
    <property type="molecule type" value="Genomic_DNA"/>
</dbReference>
<dbReference type="RefSeq" id="WP_000832569.1">
    <property type="nucleotide sequence ID" value="NC_007613.1"/>
</dbReference>
<dbReference type="SMR" id="Q31TS7"/>
<dbReference type="KEGG" id="sbo:SBO_4098"/>
<dbReference type="HOGENOM" id="CLU_018808_8_3_6"/>
<dbReference type="Proteomes" id="UP000007067">
    <property type="component" value="Chromosome"/>
</dbReference>
<dbReference type="GO" id="GO:0005886">
    <property type="term" value="C:plasma membrane"/>
    <property type="evidence" value="ECO:0007669"/>
    <property type="project" value="UniProtKB-SubCell"/>
</dbReference>
<dbReference type="GO" id="GO:0015123">
    <property type="term" value="F:acetate transmembrane transporter activity"/>
    <property type="evidence" value="ECO:0007669"/>
    <property type="project" value="UniProtKB-UniRule"/>
</dbReference>
<dbReference type="GO" id="GO:0043879">
    <property type="term" value="F:glycolate transmembrane transporter activity"/>
    <property type="evidence" value="ECO:0007669"/>
    <property type="project" value="InterPro"/>
</dbReference>
<dbReference type="GO" id="GO:0015293">
    <property type="term" value="F:symporter activity"/>
    <property type="evidence" value="ECO:0007669"/>
    <property type="project" value="UniProtKB-KW"/>
</dbReference>
<dbReference type="GO" id="GO:0006847">
    <property type="term" value="P:plasma membrane acetate transport"/>
    <property type="evidence" value="ECO:0007669"/>
    <property type="project" value="TreeGrafter"/>
</dbReference>
<dbReference type="GO" id="GO:0006814">
    <property type="term" value="P:sodium ion transport"/>
    <property type="evidence" value="ECO:0007669"/>
    <property type="project" value="UniProtKB-KW"/>
</dbReference>
<dbReference type="CDD" id="cd11480">
    <property type="entry name" value="SLC5sbd_u4"/>
    <property type="match status" value="1"/>
</dbReference>
<dbReference type="FunFam" id="1.20.1730.10:FF:000001">
    <property type="entry name" value="Cation/acetate symporter ActP"/>
    <property type="match status" value="1"/>
</dbReference>
<dbReference type="Gene3D" id="1.20.1730.10">
    <property type="entry name" value="Sodium/glucose cotransporter"/>
    <property type="match status" value="1"/>
</dbReference>
<dbReference type="HAMAP" id="MF_01426">
    <property type="entry name" value="Acet_symport_ActP"/>
    <property type="match status" value="1"/>
</dbReference>
<dbReference type="InterPro" id="IPR014083">
    <property type="entry name" value="Cation/Ac_symporter_ActP"/>
</dbReference>
<dbReference type="InterPro" id="IPR038377">
    <property type="entry name" value="Na/Glc_symporter_sf"/>
</dbReference>
<dbReference type="InterPro" id="IPR001734">
    <property type="entry name" value="Na/solute_symporter"/>
</dbReference>
<dbReference type="InterPro" id="IPR018212">
    <property type="entry name" value="Na/solute_symporter_CS"/>
</dbReference>
<dbReference type="InterPro" id="IPR050277">
    <property type="entry name" value="Sodium:Solute_Symporter"/>
</dbReference>
<dbReference type="NCBIfam" id="NF006903">
    <property type="entry name" value="PRK09395.1"/>
    <property type="match status" value="1"/>
</dbReference>
<dbReference type="NCBIfam" id="NF009135">
    <property type="entry name" value="PRK12488.1"/>
    <property type="match status" value="1"/>
</dbReference>
<dbReference type="NCBIfam" id="TIGR00813">
    <property type="entry name" value="sss"/>
    <property type="match status" value="1"/>
</dbReference>
<dbReference type="NCBIfam" id="TIGR02711">
    <property type="entry name" value="symport_actP"/>
    <property type="match status" value="1"/>
</dbReference>
<dbReference type="PANTHER" id="PTHR48086:SF6">
    <property type="entry name" value="CATION_ACETATE SYMPORTER ACTP"/>
    <property type="match status" value="1"/>
</dbReference>
<dbReference type="PANTHER" id="PTHR48086">
    <property type="entry name" value="SODIUM/PROLINE SYMPORTER-RELATED"/>
    <property type="match status" value="1"/>
</dbReference>
<dbReference type="Pfam" id="PF00474">
    <property type="entry name" value="SSF"/>
    <property type="match status" value="1"/>
</dbReference>
<dbReference type="PROSITE" id="PS00456">
    <property type="entry name" value="NA_SOLUT_SYMP_1"/>
    <property type="match status" value="1"/>
</dbReference>
<dbReference type="PROSITE" id="PS50283">
    <property type="entry name" value="NA_SOLUT_SYMP_3"/>
    <property type="match status" value="1"/>
</dbReference>
<accession>Q31TS7</accession>
<evidence type="ECO:0000255" key="1">
    <source>
        <dbReference type="HAMAP-Rule" id="MF_01426"/>
    </source>
</evidence>
<name>ACTP_SHIBS</name>
<feature type="chain" id="PRO_1000024341" description="Cation/acetate symporter ActP">
    <location>
        <begin position="1"/>
        <end position="549"/>
    </location>
</feature>
<feature type="transmembrane region" description="Helical" evidence="1">
    <location>
        <begin position="33"/>
        <end position="53"/>
    </location>
</feature>
<feature type="transmembrane region" description="Helical" evidence="1">
    <location>
        <begin position="77"/>
        <end position="97"/>
    </location>
</feature>
<feature type="transmembrane region" description="Helical" evidence="1">
    <location>
        <begin position="103"/>
        <end position="123"/>
    </location>
</feature>
<feature type="transmembrane region" description="Helical" evidence="1">
    <location>
        <begin position="148"/>
        <end position="168"/>
    </location>
</feature>
<feature type="transmembrane region" description="Helical" evidence="1">
    <location>
        <begin position="183"/>
        <end position="203"/>
    </location>
</feature>
<feature type="transmembrane region" description="Helical" evidence="1">
    <location>
        <begin position="206"/>
        <end position="226"/>
    </location>
</feature>
<feature type="transmembrane region" description="Helical" evidence="1">
    <location>
        <begin position="262"/>
        <end position="282"/>
    </location>
</feature>
<feature type="transmembrane region" description="Helical" evidence="1">
    <location>
        <begin position="303"/>
        <end position="323"/>
    </location>
</feature>
<feature type="transmembrane region" description="Helical" evidence="1">
    <location>
        <begin position="355"/>
        <end position="375"/>
    </location>
</feature>
<feature type="transmembrane region" description="Helical" evidence="1">
    <location>
        <begin position="404"/>
        <end position="424"/>
    </location>
</feature>
<feature type="transmembrane region" description="Helical" evidence="1">
    <location>
        <begin position="428"/>
        <end position="448"/>
    </location>
</feature>
<feature type="transmembrane region" description="Helical" evidence="1">
    <location>
        <begin position="464"/>
        <end position="484"/>
    </location>
</feature>
<feature type="transmembrane region" description="Helical" evidence="1">
    <location>
        <begin position="493"/>
        <end position="513"/>
    </location>
</feature>
<comment type="function">
    <text evidence="1">Transports acetate.</text>
</comment>
<comment type="subcellular location">
    <subcellularLocation>
        <location evidence="1">Cell inner membrane</location>
        <topology evidence="1">Multi-pass membrane protein</topology>
    </subcellularLocation>
</comment>
<comment type="similarity">
    <text evidence="1">Belongs to the sodium:solute symporter (SSF) (TC 2.A.21) family.</text>
</comment>
<protein>
    <recommendedName>
        <fullName evidence="1">Cation/acetate symporter ActP</fullName>
    </recommendedName>
    <alternativeName>
        <fullName evidence="1">Acetate permease</fullName>
    </alternativeName>
    <alternativeName>
        <fullName evidence="1">Acetate transporter ActP</fullName>
    </alternativeName>
</protein>
<organism>
    <name type="scientific">Shigella boydii serotype 4 (strain Sb227)</name>
    <dbReference type="NCBI Taxonomy" id="300268"/>
    <lineage>
        <taxon>Bacteria</taxon>
        <taxon>Pseudomonadati</taxon>
        <taxon>Pseudomonadota</taxon>
        <taxon>Gammaproteobacteria</taxon>
        <taxon>Enterobacterales</taxon>
        <taxon>Enterobacteriaceae</taxon>
        <taxon>Shigella</taxon>
    </lineage>
</organism>
<sequence>MKRVLTALAATLPFAANAADAISGAVERQPTNWQAIIMFLIFVVFTLGITYWASKRVRSRSDYYTAGGNITGFQNGLAIAGDYMSAASFLGISALVFTSGYDGLIYSLGFLVGWPIILFLIAERLRNLGRYTFADVASYRLKQGPIRILSACGSLVVVALYLIAQMVGAGKLIELLFGLNYHIAVVLVGVLMMMYVLFGGMLATTWVQIIKAVLLLFGASFMAFMVMKHVGFSFNNLFSEAMAVHPKGVDIMKPGGLVKDPISALSLGLGLMFGTAGLPHILMRFFTVSDAREARKSVFYATGFMGYFYILTFIIGFGAIMLVGANPEYKDAAGHLIGGNNMAAVHLANAVGGNLFLGFISAVAFATILAVVAGLTLAGASAVSHDLYANVFKKGATEREELRVSKITVLILGVIAIILGMLFENQNIAFMVGLAFAIAASCNFPIILLSMYWSKLTTRGTMLGGWLGLITAVVLMILGPTIWVQILGHEKAIFPYEYPALFSISVAFLGIWFFSATDNSAEGARERELFRAQFIRSQTGFGVEQGRAH</sequence>
<proteinExistence type="inferred from homology"/>